<name>LACC_STRP4</name>
<protein>
    <recommendedName>
        <fullName evidence="1">Tagatose-6-phosphate kinase</fullName>
        <ecNumber evidence="1">2.7.1.144</ecNumber>
    </recommendedName>
    <alternativeName>
        <fullName evidence="1">Phosphotagatokinase</fullName>
    </alternativeName>
</protein>
<feature type="chain" id="PRO_1000147089" description="Tagatose-6-phosphate kinase">
    <location>
        <begin position="1"/>
        <end position="309"/>
    </location>
</feature>
<organism>
    <name type="scientific">Streptococcus pneumoniae serotype 19F (strain G54)</name>
    <dbReference type="NCBI Taxonomy" id="512566"/>
    <lineage>
        <taxon>Bacteria</taxon>
        <taxon>Bacillati</taxon>
        <taxon>Bacillota</taxon>
        <taxon>Bacilli</taxon>
        <taxon>Lactobacillales</taxon>
        <taxon>Streptococcaceae</taxon>
        <taxon>Streptococcus</taxon>
    </lineage>
</organism>
<gene>
    <name evidence="1" type="primary">lacC</name>
    <name type="ordered locus">SPG_1086</name>
</gene>
<keyword id="KW-0067">ATP-binding</keyword>
<keyword id="KW-0418">Kinase</keyword>
<keyword id="KW-0423">Lactose metabolism</keyword>
<keyword id="KW-0547">Nucleotide-binding</keyword>
<keyword id="KW-0808">Transferase</keyword>
<sequence length="309" mass="33424">MILTVTMNPSIDISYPLDELKIDTVNRVVDVTKTAGGKGLNVTRVLSEFGDSVLATGLVGGKLGEFLVEHIDNQVKKDFFSIKGETRNCIAILHGDNQTEVLEKGPEVLEQEGQEFLEHFKKLLESVEVVAISGSLPAGLPVDYYASLVELANQAGKPVVLDCSGAALQAVLESPHKPTVIKPNNEELSQLLGREVSEDLDELKEVLQEPLFAGIEWIIVSLGANGTFAKHGDTFYKVDIPRIQVVNPVGSGDXTVAGISSGLLHKESDAELLIKANVLGMLNAQEKMTGHVNMANYQALYDQLIVKEV</sequence>
<dbReference type="EC" id="2.7.1.144" evidence="1"/>
<dbReference type="EMBL" id="CP001015">
    <property type="protein sequence ID" value="ACF55610.1"/>
    <property type="molecule type" value="Genomic_DNA"/>
</dbReference>
<dbReference type="KEGG" id="spx:SPG_1086"/>
<dbReference type="HOGENOM" id="CLU_050013_5_0_9"/>
<dbReference type="UniPathway" id="UPA00704">
    <property type="reaction ID" value="UER00715"/>
</dbReference>
<dbReference type="GO" id="GO:0005829">
    <property type="term" value="C:cytosol"/>
    <property type="evidence" value="ECO:0007669"/>
    <property type="project" value="TreeGrafter"/>
</dbReference>
<dbReference type="GO" id="GO:0005524">
    <property type="term" value="F:ATP binding"/>
    <property type="evidence" value="ECO:0007669"/>
    <property type="project" value="UniProtKB-KW"/>
</dbReference>
<dbReference type="GO" id="GO:0008443">
    <property type="term" value="F:phosphofructokinase activity"/>
    <property type="evidence" value="ECO:0007669"/>
    <property type="project" value="TreeGrafter"/>
</dbReference>
<dbReference type="GO" id="GO:0009024">
    <property type="term" value="F:tagatose-6-phosphate kinase activity"/>
    <property type="evidence" value="ECO:0007669"/>
    <property type="project" value="UniProtKB-UniRule"/>
</dbReference>
<dbReference type="GO" id="GO:2001059">
    <property type="term" value="P:D-tagatose 6-phosphate catabolic process"/>
    <property type="evidence" value="ECO:0007669"/>
    <property type="project" value="UniProtKB-UniRule"/>
</dbReference>
<dbReference type="GO" id="GO:0019512">
    <property type="term" value="P:lactose catabolic process via tagatose-6-phosphate"/>
    <property type="evidence" value="ECO:0007669"/>
    <property type="project" value="InterPro"/>
</dbReference>
<dbReference type="CDD" id="cd01164">
    <property type="entry name" value="FruK_PfkB_like"/>
    <property type="match status" value="1"/>
</dbReference>
<dbReference type="FunFam" id="3.40.1190.20:FF:000001">
    <property type="entry name" value="Phosphofructokinase"/>
    <property type="match status" value="1"/>
</dbReference>
<dbReference type="Gene3D" id="3.40.1190.20">
    <property type="match status" value="1"/>
</dbReference>
<dbReference type="HAMAP" id="MF_01557">
    <property type="entry name" value="LacC"/>
    <property type="match status" value="1"/>
</dbReference>
<dbReference type="InterPro" id="IPR002173">
    <property type="entry name" value="Carboh/pur_kinase_PfkB_CS"/>
</dbReference>
<dbReference type="InterPro" id="IPR005926">
    <property type="entry name" value="LacC"/>
</dbReference>
<dbReference type="InterPro" id="IPR011611">
    <property type="entry name" value="PfkB_dom"/>
</dbReference>
<dbReference type="InterPro" id="IPR029056">
    <property type="entry name" value="Ribokinase-like"/>
</dbReference>
<dbReference type="InterPro" id="IPR017583">
    <property type="entry name" value="Tagatose/fructose_Pkinase"/>
</dbReference>
<dbReference type="NCBIfam" id="TIGR03168">
    <property type="entry name" value="1-PFK"/>
    <property type="match status" value="1"/>
</dbReference>
<dbReference type="NCBIfam" id="TIGR01231">
    <property type="entry name" value="lacC"/>
    <property type="match status" value="1"/>
</dbReference>
<dbReference type="NCBIfam" id="NF010033">
    <property type="entry name" value="PRK13508.1"/>
    <property type="match status" value="1"/>
</dbReference>
<dbReference type="PANTHER" id="PTHR46566:SF5">
    <property type="entry name" value="1-PHOSPHOFRUCTOKINASE"/>
    <property type="match status" value="1"/>
</dbReference>
<dbReference type="PANTHER" id="PTHR46566">
    <property type="entry name" value="1-PHOSPHOFRUCTOKINASE-RELATED"/>
    <property type="match status" value="1"/>
</dbReference>
<dbReference type="Pfam" id="PF00294">
    <property type="entry name" value="PfkB"/>
    <property type="match status" value="1"/>
</dbReference>
<dbReference type="PIRSF" id="PIRSF000535">
    <property type="entry name" value="1PFK/6PFK/LacC"/>
    <property type="match status" value="1"/>
</dbReference>
<dbReference type="SUPFAM" id="SSF53613">
    <property type="entry name" value="Ribokinase-like"/>
    <property type="match status" value="1"/>
</dbReference>
<dbReference type="PROSITE" id="PS00583">
    <property type="entry name" value="PFKB_KINASES_1"/>
    <property type="match status" value="1"/>
</dbReference>
<dbReference type="PROSITE" id="PS00584">
    <property type="entry name" value="PFKB_KINASES_2"/>
    <property type="match status" value="1"/>
</dbReference>
<accession>B5E4T0</accession>
<evidence type="ECO:0000255" key="1">
    <source>
        <dbReference type="HAMAP-Rule" id="MF_01557"/>
    </source>
</evidence>
<proteinExistence type="inferred from homology"/>
<reference key="1">
    <citation type="journal article" date="2001" name="Microb. Drug Resist.">
        <title>Annotated draft genomic sequence from a Streptococcus pneumoniae type 19F clinical isolate.</title>
        <authorList>
            <person name="Dopazo J."/>
            <person name="Mendoza A."/>
            <person name="Herrero J."/>
            <person name="Caldara F."/>
            <person name="Humbert Y."/>
            <person name="Friedli L."/>
            <person name="Guerrier M."/>
            <person name="Grand-Schenk E."/>
            <person name="Gandin C."/>
            <person name="de Francesco M."/>
            <person name="Polissi A."/>
            <person name="Buell G."/>
            <person name="Feger G."/>
            <person name="Garcia E."/>
            <person name="Peitsch M."/>
            <person name="Garcia-Bustos J.F."/>
        </authorList>
    </citation>
    <scope>NUCLEOTIDE SEQUENCE [LARGE SCALE GENOMIC DNA]</scope>
    <source>
        <strain>G54</strain>
    </source>
</reference>
<reference key="2">
    <citation type="submission" date="2008-03" db="EMBL/GenBank/DDBJ databases">
        <title>Pneumococcal beta glucoside metabolism investigated by whole genome comparison.</title>
        <authorList>
            <person name="Mulas L."/>
            <person name="Trappetti C."/>
            <person name="Hakenbeck R."/>
            <person name="Iannelli F."/>
            <person name="Pozzi G."/>
            <person name="Davidsen T.M."/>
            <person name="Tettelin H."/>
            <person name="Oggioni M."/>
        </authorList>
    </citation>
    <scope>NUCLEOTIDE SEQUENCE [LARGE SCALE GENOMIC DNA]</scope>
    <source>
        <strain>G54</strain>
    </source>
</reference>
<comment type="catalytic activity">
    <reaction evidence="1">
        <text>D-tagatofuranose 6-phosphate + ATP = D-tagatofuranose 1,6-bisphosphate + ADP + H(+)</text>
        <dbReference type="Rhea" id="RHEA:12420"/>
        <dbReference type="ChEBI" id="CHEBI:15378"/>
        <dbReference type="ChEBI" id="CHEBI:30616"/>
        <dbReference type="ChEBI" id="CHEBI:58694"/>
        <dbReference type="ChEBI" id="CHEBI:58695"/>
        <dbReference type="ChEBI" id="CHEBI:456216"/>
        <dbReference type="EC" id="2.7.1.144"/>
    </reaction>
</comment>
<comment type="pathway">
    <text evidence="1">Carbohydrate metabolism; D-tagatose 6-phosphate degradation; D-glyceraldehyde 3-phosphate and glycerone phosphate from D-tagatose 6-phosphate: step 1/2.</text>
</comment>
<comment type="similarity">
    <text evidence="1">Belongs to the carbohydrate kinase PfkB family. LacC subfamily.</text>
</comment>